<keyword id="KW-0030">Aminoacyl-tRNA synthetase</keyword>
<keyword id="KW-0067">ATP-binding</keyword>
<keyword id="KW-0963">Cytoplasm</keyword>
<keyword id="KW-0436">Ligase</keyword>
<keyword id="KW-0547">Nucleotide-binding</keyword>
<keyword id="KW-0648">Protein biosynthesis</keyword>
<keyword id="KW-0694">RNA-binding</keyword>
<comment type="function">
    <text evidence="1">Catalyzes the attachment of tyrosine to tRNA(Tyr) in a two-step reaction: tyrosine is first activated by ATP to form Tyr-AMP and then transferred to the acceptor end of tRNA(Tyr).</text>
</comment>
<comment type="catalytic activity">
    <reaction evidence="1">
        <text>tRNA(Tyr) + L-tyrosine + ATP = L-tyrosyl-tRNA(Tyr) + AMP + diphosphate + H(+)</text>
        <dbReference type="Rhea" id="RHEA:10220"/>
        <dbReference type="Rhea" id="RHEA-COMP:9706"/>
        <dbReference type="Rhea" id="RHEA-COMP:9707"/>
        <dbReference type="ChEBI" id="CHEBI:15378"/>
        <dbReference type="ChEBI" id="CHEBI:30616"/>
        <dbReference type="ChEBI" id="CHEBI:33019"/>
        <dbReference type="ChEBI" id="CHEBI:58315"/>
        <dbReference type="ChEBI" id="CHEBI:78442"/>
        <dbReference type="ChEBI" id="CHEBI:78536"/>
        <dbReference type="ChEBI" id="CHEBI:456215"/>
        <dbReference type="EC" id="6.1.1.1"/>
    </reaction>
</comment>
<comment type="subunit">
    <text evidence="1">Homodimer.</text>
</comment>
<comment type="subcellular location">
    <subcellularLocation>
        <location evidence="1">Cytoplasm</location>
    </subcellularLocation>
</comment>
<comment type="similarity">
    <text evidence="1">Belongs to the class-I aminoacyl-tRNA synthetase family. TyrS type 2 subfamily.</text>
</comment>
<reference key="1">
    <citation type="journal article" date="2003" name="Nat. Genet.">
        <title>Comparative analysis of the genome sequences of Bordetella pertussis, Bordetella parapertussis and Bordetella bronchiseptica.</title>
        <authorList>
            <person name="Parkhill J."/>
            <person name="Sebaihia M."/>
            <person name="Preston A."/>
            <person name="Murphy L.D."/>
            <person name="Thomson N.R."/>
            <person name="Harris D.E."/>
            <person name="Holden M.T.G."/>
            <person name="Churcher C.M."/>
            <person name="Bentley S.D."/>
            <person name="Mungall K.L."/>
            <person name="Cerdeno-Tarraga A.-M."/>
            <person name="Temple L."/>
            <person name="James K.D."/>
            <person name="Harris B."/>
            <person name="Quail M.A."/>
            <person name="Achtman M."/>
            <person name="Atkin R."/>
            <person name="Baker S."/>
            <person name="Basham D."/>
            <person name="Bason N."/>
            <person name="Cherevach I."/>
            <person name="Chillingworth T."/>
            <person name="Collins M."/>
            <person name="Cronin A."/>
            <person name="Davis P."/>
            <person name="Doggett J."/>
            <person name="Feltwell T."/>
            <person name="Goble A."/>
            <person name="Hamlin N."/>
            <person name="Hauser H."/>
            <person name="Holroyd S."/>
            <person name="Jagels K."/>
            <person name="Leather S."/>
            <person name="Moule S."/>
            <person name="Norberczak H."/>
            <person name="O'Neil S."/>
            <person name="Ormond D."/>
            <person name="Price C."/>
            <person name="Rabbinowitsch E."/>
            <person name="Rutter S."/>
            <person name="Sanders M."/>
            <person name="Saunders D."/>
            <person name="Seeger K."/>
            <person name="Sharp S."/>
            <person name="Simmonds M."/>
            <person name="Skelton J."/>
            <person name="Squares R."/>
            <person name="Squares S."/>
            <person name="Stevens K."/>
            <person name="Unwin L."/>
            <person name="Whitehead S."/>
            <person name="Barrell B.G."/>
            <person name="Maskell D.J."/>
        </authorList>
    </citation>
    <scope>NUCLEOTIDE SEQUENCE [LARGE SCALE GENOMIC DNA]</scope>
    <source>
        <strain>12822 / ATCC BAA-587 / NCTC 13253</strain>
    </source>
</reference>
<proteinExistence type="inferred from homology"/>
<evidence type="ECO:0000255" key="1">
    <source>
        <dbReference type="HAMAP-Rule" id="MF_02007"/>
    </source>
</evidence>
<sequence length="409" mass="45000">MSHPEAPITPEVEADLAIARRGCDELLVESEFARKLARSRATGVPLRIKLGLDPTAPDIHLGHTVVLNKMRQLQDLGHNVIFLIGDFTSTIGDPSGRNSTRPPLTREQIETNAKTYYAQASLVLDPARTEIRYNSEWCDPLGARGMIQLASRYTVARMMEREDFTRRFKGGVPIAVHEFLYPLLQGYDSVALKADLELGGTDQKFNLLVGRELQKEYGQEQQCILTMPLLVGTDGVEKMSKSKGNYIGISEAPESMFGKLMSISDMLMWRYYELLSFRSLADIAALKAEIDGGRNPRDAKVALAQEIVARFHSPQAAEAALAAFEARFRDGAIPEDMPEVTVGGAPQGILRILREAGLVASGSEAQRNVEQGGVRVNGDRVEDKSLQLSAGTYVVQVGKRKFARVKLVG</sequence>
<gene>
    <name evidence="1" type="primary">tyrS</name>
    <name type="ordered locus">BPP3877</name>
</gene>
<protein>
    <recommendedName>
        <fullName evidence="1">Tyrosine--tRNA ligase</fullName>
        <ecNumber evidence="1">6.1.1.1</ecNumber>
    </recommendedName>
    <alternativeName>
        <fullName evidence="1">Tyrosyl-tRNA synthetase</fullName>
        <shortName evidence="1">TyrRS</shortName>
    </alternativeName>
</protein>
<accession>Q7W3Z8</accession>
<name>SYY_BORPA</name>
<organism>
    <name type="scientific">Bordetella parapertussis (strain 12822 / ATCC BAA-587 / NCTC 13253)</name>
    <dbReference type="NCBI Taxonomy" id="257311"/>
    <lineage>
        <taxon>Bacteria</taxon>
        <taxon>Pseudomonadati</taxon>
        <taxon>Pseudomonadota</taxon>
        <taxon>Betaproteobacteria</taxon>
        <taxon>Burkholderiales</taxon>
        <taxon>Alcaligenaceae</taxon>
        <taxon>Bordetella</taxon>
    </lineage>
</organism>
<feature type="chain" id="PRO_0000236698" description="Tyrosine--tRNA ligase">
    <location>
        <begin position="1"/>
        <end position="409"/>
    </location>
</feature>
<feature type="domain" description="S4 RNA-binding" evidence="1">
    <location>
        <begin position="347"/>
        <end position="407"/>
    </location>
</feature>
<feature type="short sequence motif" description="'HIGH' region">
    <location>
        <begin position="54"/>
        <end position="63"/>
    </location>
</feature>
<feature type="short sequence motif" description="'KMSKS' region">
    <location>
        <begin position="238"/>
        <end position="242"/>
    </location>
</feature>
<feature type="binding site" evidence="1">
    <location>
        <position position="241"/>
    </location>
    <ligand>
        <name>ATP</name>
        <dbReference type="ChEBI" id="CHEBI:30616"/>
    </ligand>
</feature>
<dbReference type="EC" id="6.1.1.1" evidence="1"/>
<dbReference type="EMBL" id="BX640435">
    <property type="protein sequence ID" value="CAE39160.1"/>
    <property type="molecule type" value="Genomic_DNA"/>
</dbReference>
<dbReference type="RefSeq" id="WP_010929291.1">
    <property type="nucleotide sequence ID" value="NC_002928.3"/>
</dbReference>
<dbReference type="SMR" id="Q7W3Z8"/>
<dbReference type="GeneID" id="93205677"/>
<dbReference type="KEGG" id="bpa:BPP3877"/>
<dbReference type="HOGENOM" id="CLU_024003_5_0_4"/>
<dbReference type="Proteomes" id="UP000001421">
    <property type="component" value="Chromosome"/>
</dbReference>
<dbReference type="GO" id="GO:0005829">
    <property type="term" value="C:cytosol"/>
    <property type="evidence" value="ECO:0007669"/>
    <property type="project" value="TreeGrafter"/>
</dbReference>
<dbReference type="GO" id="GO:0005524">
    <property type="term" value="F:ATP binding"/>
    <property type="evidence" value="ECO:0007669"/>
    <property type="project" value="UniProtKB-UniRule"/>
</dbReference>
<dbReference type="GO" id="GO:0003723">
    <property type="term" value="F:RNA binding"/>
    <property type="evidence" value="ECO:0007669"/>
    <property type="project" value="UniProtKB-KW"/>
</dbReference>
<dbReference type="GO" id="GO:0004831">
    <property type="term" value="F:tyrosine-tRNA ligase activity"/>
    <property type="evidence" value="ECO:0007669"/>
    <property type="project" value="UniProtKB-UniRule"/>
</dbReference>
<dbReference type="GO" id="GO:0006437">
    <property type="term" value="P:tyrosyl-tRNA aminoacylation"/>
    <property type="evidence" value="ECO:0007669"/>
    <property type="project" value="UniProtKB-UniRule"/>
</dbReference>
<dbReference type="CDD" id="cd00165">
    <property type="entry name" value="S4"/>
    <property type="match status" value="1"/>
</dbReference>
<dbReference type="CDD" id="cd00805">
    <property type="entry name" value="TyrRS_core"/>
    <property type="match status" value="1"/>
</dbReference>
<dbReference type="FunFam" id="1.10.240.10:FF:000006">
    <property type="entry name" value="Tyrosine--tRNA ligase"/>
    <property type="match status" value="1"/>
</dbReference>
<dbReference type="FunFam" id="3.40.50.620:FF:000061">
    <property type="entry name" value="Tyrosine--tRNA ligase"/>
    <property type="match status" value="1"/>
</dbReference>
<dbReference type="Gene3D" id="3.40.50.620">
    <property type="entry name" value="HUPs"/>
    <property type="match status" value="1"/>
</dbReference>
<dbReference type="Gene3D" id="3.10.290.10">
    <property type="entry name" value="RNA-binding S4 domain"/>
    <property type="match status" value="1"/>
</dbReference>
<dbReference type="Gene3D" id="1.10.240.10">
    <property type="entry name" value="Tyrosyl-Transfer RNA Synthetase"/>
    <property type="match status" value="1"/>
</dbReference>
<dbReference type="HAMAP" id="MF_02007">
    <property type="entry name" value="Tyr_tRNA_synth_type2"/>
    <property type="match status" value="1"/>
</dbReference>
<dbReference type="InterPro" id="IPR001412">
    <property type="entry name" value="aa-tRNA-synth_I_CS"/>
</dbReference>
<dbReference type="InterPro" id="IPR002305">
    <property type="entry name" value="aa-tRNA-synth_Ic"/>
</dbReference>
<dbReference type="InterPro" id="IPR014729">
    <property type="entry name" value="Rossmann-like_a/b/a_fold"/>
</dbReference>
<dbReference type="InterPro" id="IPR002942">
    <property type="entry name" value="S4_RNA-bd"/>
</dbReference>
<dbReference type="InterPro" id="IPR036986">
    <property type="entry name" value="S4_RNA-bd_sf"/>
</dbReference>
<dbReference type="InterPro" id="IPR054608">
    <property type="entry name" value="SYY-like_C"/>
</dbReference>
<dbReference type="InterPro" id="IPR002307">
    <property type="entry name" value="Tyr-tRNA-ligase"/>
</dbReference>
<dbReference type="InterPro" id="IPR024088">
    <property type="entry name" value="Tyr-tRNA-ligase_bac-type"/>
</dbReference>
<dbReference type="InterPro" id="IPR024108">
    <property type="entry name" value="Tyr-tRNA-ligase_bac_2"/>
</dbReference>
<dbReference type="NCBIfam" id="TIGR00234">
    <property type="entry name" value="tyrS"/>
    <property type="match status" value="1"/>
</dbReference>
<dbReference type="PANTHER" id="PTHR11766:SF1">
    <property type="entry name" value="TYROSINE--TRNA LIGASE"/>
    <property type="match status" value="1"/>
</dbReference>
<dbReference type="PANTHER" id="PTHR11766">
    <property type="entry name" value="TYROSYL-TRNA SYNTHETASE"/>
    <property type="match status" value="1"/>
</dbReference>
<dbReference type="Pfam" id="PF22421">
    <property type="entry name" value="SYY_C-terminal"/>
    <property type="match status" value="1"/>
</dbReference>
<dbReference type="Pfam" id="PF00579">
    <property type="entry name" value="tRNA-synt_1b"/>
    <property type="match status" value="1"/>
</dbReference>
<dbReference type="PRINTS" id="PR01040">
    <property type="entry name" value="TRNASYNTHTYR"/>
</dbReference>
<dbReference type="SMART" id="SM00363">
    <property type="entry name" value="S4"/>
    <property type="match status" value="1"/>
</dbReference>
<dbReference type="SUPFAM" id="SSF55174">
    <property type="entry name" value="Alpha-L RNA-binding motif"/>
    <property type="match status" value="1"/>
</dbReference>
<dbReference type="SUPFAM" id="SSF52374">
    <property type="entry name" value="Nucleotidylyl transferase"/>
    <property type="match status" value="1"/>
</dbReference>
<dbReference type="PROSITE" id="PS00178">
    <property type="entry name" value="AA_TRNA_LIGASE_I"/>
    <property type="match status" value="1"/>
</dbReference>
<dbReference type="PROSITE" id="PS50889">
    <property type="entry name" value="S4"/>
    <property type="match status" value="1"/>
</dbReference>